<protein>
    <recommendedName>
        <fullName evidence="1">Phosphoglycerate kinase</fullName>
        <ecNumber evidence="1">2.7.2.3</ecNumber>
    </recommendedName>
</protein>
<keyword id="KW-0067">ATP-binding</keyword>
<keyword id="KW-0963">Cytoplasm</keyword>
<keyword id="KW-0324">Glycolysis</keyword>
<keyword id="KW-0418">Kinase</keyword>
<keyword id="KW-0547">Nucleotide-binding</keyword>
<keyword id="KW-0808">Transferase</keyword>
<gene>
    <name evidence="1" type="primary">pgk</name>
    <name type="ordered locus">A1S_1543</name>
</gene>
<evidence type="ECO:0000255" key="1">
    <source>
        <dbReference type="HAMAP-Rule" id="MF_00145"/>
    </source>
</evidence>
<dbReference type="EC" id="2.7.2.3" evidence="1"/>
<dbReference type="EMBL" id="CP000521">
    <property type="protein sequence ID" value="ABO11970.2"/>
    <property type="molecule type" value="Genomic_DNA"/>
</dbReference>
<dbReference type="RefSeq" id="WP_001011091.1">
    <property type="nucleotide sequence ID" value="NZ_CP053098.1"/>
</dbReference>
<dbReference type="SMR" id="A3M4X6"/>
<dbReference type="KEGG" id="acb:A1S_1543"/>
<dbReference type="HOGENOM" id="CLU_025427_0_2_6"/>
<dbReference type="UniPathway" id="UPA00109">
    <property type="reaction ID" value="UER00185"/>
</dbReference>
<dbReference type="GO" id="GO:0005829">
    <property type="term" value="C:cytosol"/>
    <property type="evidence" value="ECO:0007669"/>
    <property type="project" value="TreeGrafter"/>
</dbReference>
<dbReference type="GO" id="GO:0043531">
    <property type="term" value="F:ADP binding"/>
    <property type="evidence" value="ECO:0007669"/>
    <property type="project" value="TreeGrafter"/>
</dbReference>
<dbReference type="GO" id="GO:0005524">
    <property type="term" value="F:ATP binding"/>
    <property type="evidence" value="ECO:0007669"/>
    <property type="project" value="UniProtKB-KW"/>
</dbReference>
<dbReference type="GO" id="GO:0004618">
    <property type="term" value="F:phosphoglycerate kinase activity"/>
    <property type="evidence" value="ECO:0007669"/>
    <property type="project" value="UniProtKB-UniRule"/>
</dbReference>
<dbReference type="GO" id="GO:0006094">
    <property type="term" value="P:gluconeogenesis"/>
    <property type="evidence" value="ECO:0007669"/>
    <property type="project" value="TreeGrafter"/>
</dbReference>
<dbReference type="GO" id="GO:0006096">
    <property type="term" value="P:glycolytic process"/>
    <property type="evidence" value="ECO:0007669"/>
    <property type="project" value="UniProtKB-UniRule"/>
</dbReference>
<dbReference type="FunFam" id="3.40.50.1260:FF:000001">
    <property type="entry name" value="Phosphoglycerate kinase"/>
    <property type="match status" value="1"/>
</dbReference>
<dbReference type="FunFam" id="3.40.50.1260:FF:000002">
    <property type="entry name" value="Phosphoglycerate kinase"/>
    <property type="match status" value="1"/>
</dbReference>
<dbReference type="Gene3D" id="3.40.50.1260">
    <property type="entry name" value="Phosphoglycerate kinase, N-terminal domain"/>
    <property type="match status" value="2"/>
</dbReference>
<dbReference type="HAMAP" id="MF_00145">
    <property type="entry name" value="Phosphoglyc_kinase"/>
    <property type="match status" value="1"/>
</dbReference>
<dbReference type="InterPro" id="IPR001576">
    <property type="entry name" value="Phosphoglycerate_kinase"/>
</dbReference>
<dbReference type="InterPro" id="IPR015911">
    <property type="entry name" value="Phosphoglycerate_kinase_CS"/>
</dbReference>
<dbReference type="InterPro" id="IPR015824">
    <property type="entry name" value="Phosphoglycerate_kinase_N"/>
</dbReference>
<dbReference type="InterPro" id="IPR036043">
    <property type="entry name" value="Phosphoglycerate_kinase_sf"/>
</dbReference>
<dbReference type="PANTHER" id="PTHR11406">
    <property type="entry name" value="PHOSPHOGLYCERATE KINASE"/>
    <property type="match status" value="1"/>
</dbReference>
<dbReference type="PANTHER" id="PTHR11406:SF23">
    <property type="entry name" value="PHOSPHOGLYCERATE KINASE 1, CHLOROPLASTIC-RELATED"/>
    <property type="match status" value="1"/>
</dbReference>
<dbReference type="Pfam" id="PF00162">
    <property type="entry name" value="PGK"/>
    <property type="match status" value="1"/>
</dbReference>
<dbReference type="PIRSF" id="PIRSF000724">
    <property type="entry name" value="Pgk"/>
    <property type="match status" value="1"/>
</dbReference>
<dbReference type="PRINTS" id="PR00477">
    <property type="entry name" value="PHGLYCKINASE"/>
</dbReference>
<dbReference type="SUPFAM" id="SSF53748">
    <property type="entry name" value="Phosphoglycerate kinase"/>
    <property type="match status" value="1"/>
</dbReference>
<dbReference type="PROSITE" id="PS00111">
    <property type="entry name" value="PGLYCERATE_KINASE"/>
    <property type="match status" value="1"/>
</dbReference>
<proteinExistence type="inferred from homology"/>
<accession>A3M4X6</accession>
<comment type="catalytic activity">
    <reaction evidence="1">
        <text>(2R)-3-phosphoglycerate + ATP = (2R)-3-phospho-glyceroyl phosphate + ADP</text>
        <dbReference type="Rhea" id="RHEA:14801"/>
        <dbReference type="ChEBI" id="CHEBI:30616"/>
        <dbReference type="ChEBI" id="CHEBI:57604"/>
        <dbReference type="ChEBI" id="CHEBI:58272"/>
        <dbReference type="ChEBI" id="CHEBI:456216"/>
        <dbReference type="EC" id="2.7.2.3"/>
    </reaction>
</comment>
<comment type="pathway">
    <text evidence="1">Carbohydrate degradation; glycolysis; pyruvate from D-glyceraldehyde 3-phosphate: step 2/5.</text>
</comment>
<comment type="subunit">
    <text evidence="1">Monomer.</text>
</comment>
<comment type="subcellular location">
    <subcellularLocation>
        <location evidence="1">Cytoplasm</location>
    </subcellularLocation>
</comment>
<comment type="similarity">
    <text evidence="1">Belongs to the phosphoglycerate kinase family.</text>
</comment>
<feature type="chain" id="PRO_1000096313" description="Phosphoglycerate kinase">
    <location>
        <begin position="1"/>
        <end position="395"/>
    </location>
</feature>
<feature type="binding site" evidence="1">
    <location>
        <begin position="21"/>
        <end position="23"/>
    </location>
    <ligand>
        <name>substrate</name>
    </ligand>
</feature>
<feature type="binding site" evidence="1">
    <location>
        <position position="36"/>
    </location>
    <ligand>
        <name>substrate</name>
    </ligand>
</feature>
<feature type="binding site" evidence="1">
    <location>
        <begin position="59"/>
        <end position="62"/>
    </location>
    <ligand>
        <name>substrate</name>
    </ligand>
</feature>
<feature type="binding site" evidence="1">
    <location>
        <position position="113"/>
    </location>
    <ligand>
        <name>substrate</name>
    </ligand>
</feature>
<feature type="binding site" evidence="1">
    <location>
        <position position="146"/>
    </location>
    <ligand>
        <name>substrate</name>
    </ligand>
</feature>
<feature type="binding site" evidence="1">
    <location>
        <position position="197"/>
    </location>
    <ligand>
        <name>ATP</name>
        <dbReference type="ChEBI" id="CHEBI:30616"/>
    </ligand>
</feature>
<feature type="binding site" evidence="1">
    <location>
        <position position="324"/>
    </location>
    <ligand>
        <name>ATP</name>
        <dbReference type="ChEBI" id="CHEBI:30616"/>
    </ligand>
</feature>
<feature type="binding site" evidence="1">
    <location>
        <begin position="350"/>
        <end position="353"/>
    </location>
    <ligand>
        <name>ATP</name>
        <dbReference type="ChEBI" id="CHEBI:30616"/>
    </ligand>
</feature>
<organism>
    <name type="scientific">Acinetobacter baumannii (strain ATCC 17978 / DSM 105126 / CIP 53.77 / LMG 1025 / NCDC KC755 / 5377)</name>
    <dbReference type="NCBI Taxonomy" id="400667"/>
    <lineage>
        <taxon>Bacteria</taxon>
        <taxon>Pseudomonadati</taxon>
        <taxon>Pseudomonadota</taxon>
        <taxon>Gammaproteobacteria</taxon>
        <taxon>Moraxellales</taxon>
        <taxon>Moraxellaceae</taxon>
        <taxon>Acinetobacter</taxon>
        <taxon>Acinetobacter calcoaceticus/baumannii complex</taxon>
    </lineage>
</organism>
<reference key="1">
    <citation type="journal article" date="2007" name="Genes Dev.">
        <title>New insights into Acinetobacter baumannii pathogenesis revealed by high-density pyrosequencing and transposon mutagenesis.</title>
        <authorList>
            <person name="Smith M.G."/>
            <person name="Gianoulis T.A."/>
            <person name="Pukatzki S."/>
            <person name="Mekalanos J.J."/>
            <person name="Ornston L.N."/>
            <person name="Gerstein M."/>
            <person name="Snyder M."/>
        </authorList>
    </citation>
    <scope>NUCLEOTIDE SEQUENCE [LARGE SCALE GENOMIC DNA]</scope>
    <source>
        <strain>ATCC 17978 / DSM 105126 / CIP 53.77 / LMG 1025 / NCDC KC755 / 5377</strain>
    </source>
</reference>
<sequence length="395" mass="41291">MNFQRMTDLNLAGKRVLIREDLNVPVKNGVITSDARLRAALPTIKAALEKGAAVMVFSHLGRPVEGEPKPEQSLALVAAYLTEALGQEVKLFTDYLDGVEVEAGQVVLLENVRFNPGEKKNNPELAQKYAALCDVFVMDAFGTAHRAEASTEGVARFAPVAAAGPLLAAELDALGRAMQTPEKPMVAIVAGSKVSTKLDVLNSLSGICDQLIVGGGIANTFLAAAGYNVGKSLYEADLVETAKQIAAKVSVPLPTDVVVADASQINFEDFLGSLAAAQAVIKKVEDVTANDMILDVGPETAKAFANILTTSKTILWNGPVGVFEVDQFGEGTKALSLAVAQSDAFSIAGGGDTLAAIDKYNVADQIGYISTGGGAFLEFVEGKTLPAVAVLLERA</sequence>
<name>PGK_ACIBT</name>